<keyword id="KW-0325">Glycoprotein</keyword>
<keyword id="KW-0333">Golgi apparatus</keyword>
<keyword id="KW-0472">Membrane</keyword>
<keyword id="KW-0653">Protein transport</keyword>
<keyword id="KW-0675">Receptor</keyword>
<keyword id="KW-1185">Reference proteome</keyword>
<keyword id="KW-0677">Repeat</keyword>
<keyword id="KW-0732">Signal</keyword>
<keyword id="KW-0812">Transmembrane</keyword>
<keyword id="KW-1133">Transmembrane helix</keyword>
<keyword id="KW-0813">Transport</keyword>
<sequence>MISRWLLLIGLLALALFSQPCATEKAEPQINSTPFDHEPFFMSYFEDSDTILMLTTQRNLFRSFDGGKGWERVDDMDGKMKQHVVSVLQHPSDKDKAYALGSKGRHWITTDRAKTWNAFTIHQSPAIQHEPLVFHGWDSGKVIFQTDECIGTFCIVKSYYTTDDFKTVSPLRVSAGGCAWAVGHPQFAEGLNLEDQIRNRVLCVVSGLKVPAPYANRLVYSDDFFSNEADGAEMNLHQGRPVSGVQTTAAVKKFLVAAVKSQGTDEMALYVTLDTKVWHRADFGGHRVEQDAYTVLESTNYSMQVDVLTDQSSMTGVLFTSNSNGTYFTRNVEHTNRDRFGHVDFEKIADIQGIVLVNTVSNWKKLESDHRKKIVSEVSFDDGRTFQPLTVGDKHLHLHSVTTYANTGRVFSSPAPGVVMGVGNKGDHLKEYSECDLYVSDDAGVTWRHALDGPFKYEFGDQGAIIMAVSDKGKIGEIKYSTDHGKEWHTAKLQHEIFPKMLTTTPDSTSMKFVLVGSKESTGDGFFVYSIDFGSLHGRKCEKDDFEKWPARLNEDGEPDCLMGHKQFFNRRKANADCFMDEEFKDPQPIFEPCKCTAEDYECDYNFVRSEDGKSCLPAAPLVPPAGKCREKTDKFYGPSGWRLIPGNNCIREGGENLDKDIERTCEDTNGSPETHMSHKQVFDNSKQFSGQYFYLERQASSSGNDETVLMLTREREFWVSHDHGKKWEQPLKGVQIVAIIPHPYYSDGAFLLTGGQEAFWTVDRAYTFKSFKVPIPPTRDDMPVFSFHPQYKDWLIWTGAVDCGHGDCHSDAYITKNRGKDWDLLLRYVGKCEFESRKNRPDSENLIFCEQYANENKNNHKQLLSSDSFFADSHVHFDNEARYATMSEYIIVASHDPNNANSLIASVSVDGKTFAEAKFPPNVDVPVKTAFTVLDSSTHAVFLHLTMGVLKGAEYGSIIKSNSNGTLYTVSLNAASRDDRGFVDYEKMQGLEGVAVANVISNVDTVLKKGAAAKKVKTKITHNDGGQWMLLPPPAKDAEGKDFGCSNKDGKASDKCSLHLHGYTERWDSRDTFSSGSAIGLMMGVGNVGDHLTSKEEADTFMTRDGGITWKPIKKGRYIWEYGDSGSVIVIVPESRPTKILHYSLDEGDSWENFKFSDVDMLIHRLSTLPSDTSKNFLLWGKEQDSNQLATVNVDFSSLREASCKLVEDGQDSDDYYLWEPKHPLQEDNCLFGHIEQYHRKKLAANCWNNWREPHVHSIGKNCTCTRADYECDYNYEPQSDGSCALVPGLPKPDASIVCKEDPDKIEYPELLLGYRRIPQTTCMGGWEPPVVFKPCPGKEKEYKKKHSISGIGLFFAIVTPIAMASAAGYYVYTRWDGKFGQIRLGEDIGGREAILSRDSPLVAVPIAIIAGVVAVLKALPLLAISLWRSSSSFIRTRRDRAYSRPYASRGSFAARRGDYTSVVDDEDELLGVEDGEAEGEEEEL</sequence>
<protein>
    <recommendedName>
        <fullName>Vacuolar protein sorting/targeting protein 10</fullName>
    </recommendedName>
    <alternativeName>
        <fullName>Carboxypeptidase Y receptor</fullName>
        <shortName>CPY receptor</shortName>
    </alternativeName>
    <alternativeName>
        <fullName>Sortilin vps10</fullName>
    </alternativeName>
    <alternativeName>
        <fullName>Vacuolar carboxypeptidase sorting receptor vps10</fullName>
    </alternativeName>
</protein>
<name>VPS10_ASPCL</name>
<gene>
    <name type="primary">vps10</name>
    <name type="ORF">ACLA_042930</name>
</gene>
<evidence type="ECO:0000250" key="1"/>
<evidence type="ECO:0000255" key="2"/>
<evidence type="ECO:0000305" key="3"/>
<proteinExistence type="inferred from homology"/>
<comment type="function">
    <text evidence="1">Functions as a sorting receptor in the Golgi compartment required for the intracellular sorting and delivery of soluble vacuolar proteins, like carboxypeptidase Y (CPY) and proteinase A. Executes multiple rounds of sorting by cycling between the late Golgi and a prevacuolar endosome-like compartment (By similarity).</text>
</comment>
<comment type="subcellular location">
    <subcellularLocation>
        <location evidence="1">Golgi apparatus</location>
        <location evidence="1">trans-Golgi network membrane</location>
        <topology evidence="1">Multi-pass membrane protein</topology>
    </subcellularLocation>
    <subcellularLocation>
        <location evidence="1">Prevacuolar compartment membrane</location>
        <topology evidence="1">Multi-pass membrane protein</topology>
    </subcellularLocation>
    <text evidence="1">Cycles between the Golgi apparatus and the prevacuolar compartment.</text>
</comment>
<comment type="similarity">
    <text evidence="3">Belongs to the VPS10-related sortilin family.</text>
</comment>
<reference key="1">
    <citation type="journal article" date="2008" name="PLoS Genet.">
        <title>Genomic islands in the pathogenic filamentous fungus Aspergillus fumigatus.</title>
        <authorList>
            <person name="Fedorova N.D."/>
            <person name="Khaldi N."/>
            <person name="Joardar V.S."/>
            <person name="Maiti R."/>
            <person name="Amedeo P."/>
            <person name="Anderson M.J."/>
            <person name="Crabtree J."/>
            <person name="Silva J.C."/>
            <person name="Badger J.H."/>
            <person name="Albarraq A."/>
            <person name="Angiuoli S."/>
            <person name="Bussey H."/>
            <person name="Bowyer P."/>
            <person name="Cotty P.J."/>
            <person name="Dyer P.S."/>
            <person name="Egan A."/>
            <person name="Galens K."/>
            <person name="Fraser-Liggett C.M."/>
            <person name="Haas B.J."/>
            <person name="Inman J.M."/>
            <person name="Kent R."/>
            <person name="Lemieux S."/>
            <person name="Malavazi I."/>
            <person name="Orvis J."/>
            <person name="Roemer T."/>
            <person name="Ronning C.M."/>
            <person name="Sundaram J.P."/>
            <person name="Sutton G."/>
            <person name="Turner G."/>
            <person name="Venter J.C."/>
            <person name="White O.R."/>
            <person name="Whitty B.R."/>
            <person name="Youngman P."/>
            <person name="Wolfe K.H."/>
            <person name="Goldman G.H."/>
            <person name="Wortman J.R."/>
            <person name="Jiang B."/>
            <person name="Denning D.W."/>
            <person name="Nierman W.C."/>
        </authorList>
    </citation>
    <scope>NUCLEOTIDE SEQUENCE [LARGE SCALE GENOMIC DNA]</scope>
    <source>
        <strain>ATCC 1007 / CBS 513.65 / DSM 816 / NCTC 3887 / NRRL 1 / QM 1276 / 107</strain>
    </source>
</reference>
<organism>
    <name type="scientific">Aspergillus clavatus (strain ATCC 1007 / CBS 513.65 / DSM 816 / NCTC 3887 / NRRL 1 / QM 1276 / 107)</name>
    <dbReference type="NCBI Taxonomy" id="344612"/>
    <lineage>
        <taxon>Eukaryota</taxon>
        <taxon>Fungi</taxon>
        <taxon>Dikarya</taxon>
        <taxon>Ascomycota</taxon>
        <taxon>Pezizomycotina</taxon>
        <taxon>Eurotiomycetes</taxon>
        <taxon>Eurotiomycetidae</taxon>
        <taxon>Eurotiales</taxon>
        <taxon>Aspergillaceae</taxon>
        <taxon>Aspergillus</taxon>
        <taxon>Aspergillus subgen. Fumigati</taxon>
    </lineage>
</organism>
<dbReference type="EMBL" id="DS027046">
    <property type="protein sequence ID" value="EAW13575.1"/>
    <property type="molecule type" value="Genomic_DNA"/>
</dbReference>
<dbReference type="RefSeq" id="XP_001275001.1">
    <property type="nucleotide sequence ID" value="XM_001275000.1"/>
</dbReference>
<dbReference type="SMR" id="A1C8D8"/>
<dbReference type="STRING" id="344612.A1C8D8"/>
<dbReference type="GlyCosmos" id="A1C8D8">
    <property type="glycosylation" value="4 sites, No reported glycans"/>
</dbReference>
<dbReference type="EnsemblFungi" id="EAW13575">
    <property type="protein sequence ID" value="EAW13575"/>
    <property type="gene ID" value="ACLA_042930"/>
</dbReference>
<dbReference type="GeneID" id="4707265"/>
<dbReference type="KEGG" id="act:ACLA_042930"/>
<dbReference type="VEuPathDB" id="FungiDB:ACLA_042930"/>
<dbReference type="eggNOG" id="KOG3511">
    <property type="taxonomic scope" value="Eukaryota"/>
</dbReference>
<dbReference type="HOGENOM" id="CLU_000700_0_0_1"/>
<dbReference type="OMA" id="ATMSEFI"/>
<dbReference type="OrthoDB" id="443634at2759"/>
<dbReference type="Proteomes" id="UP000006701">
    <property type="component" value="Unassembled WGS sequence"/>
</dbReference>
<dbReference type="GO" id="GO:0005829">
    <property type="term" value="C:cytosol"/>
    <property type="evidence" value="ECO:0007669"/>
    <property type="project" value="GOC"/>
</dbReference>
<dbReference type="GO" id="GO:0005794">
    <property type="term" value="C:Golgi apparatus"/>
    <property type="evidence" value="ECO:0007669"/>
    <property type="project" value="UniProtKB-SubCell"/>
</dbReference>
<dbReference type="GO" id="GO:0016020">
    <property type="term" value="C:membrane"/>
    <property type="evidence" value="ECO:0007669"/>
    <property type="project" value="UniProtKB-KW"/>
</dbReference>
<dbReference type="GO" id="GO:0006895">
    <property type="term" value="P:Golgi to endosome transport"/>
    <property type="evidence" value="ECO:0007669"/>
    <property type="project" value="TreeGrafter"/>
</dbReference>
<dbReference type="GO" id="GO:0006896">
    <property type="term" value="P:Golgi to vacuole transport"/>
    <property type="evidence" value="ECO:0007669"/>
    <property type="project" value="TreeGrafter"/>
</dbReference>
<dbReference type="GO" id="GO:0006623">
    <property type="term" value="P:protein targeting to vacuole"/>
    <property type="evidence" value="ECO:0007669"/>
    <property type="project" value="TreeGrafter"/>
</dbReference>
<dbReference type="CDD" id="cd15482">
    <property type="entry name" value="Sialidase_non-viral"/>
    <property type="match status" value="1"/>
</dbReference>
<dbReference type="FunFam" id="2.10.70.80:FF:000006">
    <property type="entry name" value="Sortilin"/>
    <property type="match status" value="1"/>
</dbReference>
<dbReference type="FunFam" id="2.130.10.10:FF:000676">
    <property type="entry name" value="Sortilin"/>
    <property type="match status" value="1"/>
</dbReference>
<dbReference type="FunFam" id="3.30.60.270:FF:000005">
    <property type="entry name" value="Sortilin"/>
    <property type="match status" value="2"/>
</dbReference>
<dbReference type="FunFam" id="2.10.70.80:FF:000001">
    <property type="entry name" value="Sortilin-related VPS10 domain-containing receptor 1"/>
    <property type="match status" value="1"/>
</dbReference>
<dbReference type="Gene3D" id="2.10.70.80">
    <property type="match status" value="2"/>
</dbReference>
<dbReference type="Gene3D" id="2.120.10.10">
    <property type="match status" value="1"/>
</dbReference>
<dbReference type="Gene3D" id="3.30.60.270">
    <property type="match status" value="2"/>
</dbReference>
<dbReference type="Gene3D" id="2.130.10.10">
    <property type="entry name" value="YVTN repeat-like/Quinoprotein amine dehydrogenase"/>
    <property type="match status" value="1"/>
</dbReference>
<dbReference type="InterPro" id="IPR031777">
    <property type="entry name" value="Sortilin_C"/>
</dbReference>
<dbReference type="InterPro" id="IPR031778">
    <property type="entry name" value="Sortilin_N"/>
</dbReference>
<dbReference type="InterPro" id="IPR006581">
    <property type="entry name" value="VPS10"/>
</dbReference>
<dbReference type="InterPro" id="IPR050310">
    <property type="entry name" value="VPS10-sortilin"/>
</dbReference>
<dbReference type="InterPro" id="IPR015943">
    <property type="entry name" value="WD40/YVTN_repeat-like_dom_sf"/>
</dbReference>
<dbReference type="PANTHER" id="PTHR12106">
    <property type="entry name" value="SORTILIN RELATED"/>
    <property type="match status" value="1"/>
</dbReference>
<dbReference type="PANTHER" id="PTHR12106:SF27">
    <property type="entry name" value="SORTILIN-RELATED RECEPTOR"/>
    <property type="match status" value="1"/>
</dbReference>
<dbReference type="Pfam" id="PF15902">
    <property type="entry name" value="Sortilin-Vps10"/>
    <property type="match status" value="2"/>
</dbReference>
<dbReference type="Pfam" id="PF15901">
    <property type="entry name" value="Sortilin_C"/>
    <property type="match status" value="2"/>
</dbReference>
<dbReference type="SMART" id="SM00602">
    <property type="entry name" value="VPS10"/>
    <property type="match status" value="2"/>
</dbReference>
<dbReference type="SUPFAM" id="SSF110296">
    <property type="entry name" value="Oligoxyloglucan reducing end-specific cellobiohydrolase"/>
    <property type="match status" value="2"/>
</dbReference>
<accession>A1C8D8</accession>
<feature type="signal peptide" evidence="2">
    <location>
        <begin position="1"/>
        <end position="23"/>
    </location>
</feature>
<feature type="chain" id="PRO_0000407503" description="Vacuolar protein sorting/targeting protein 10">
    <location>
        <begin position="24"/>
        <end position="1486"/>
    </location>
</feature>
<feature type="topological domain" description="Lumenal" evidence="2">
    <location>
        <begin position="24"/>
        <end position="1349"/>
    </location>
</feature>
<feature type="transmembrane region" description="Helical" evidence="2">
    <location>
        <begin position="1350"/>
        <end position="1370"/>
    </location>
</feature>
<feature type="topological domain" description="Cytoplasmic" evidence="2">
    <location>
        <begin position="1371"/>
        <end position="1405"/>
    </location>
</feature>
<feature type="transmembrane region" description="Helical" evidence="2">
    <location>
        <begin position="1406"/>
        <end position="1426"/>
    </location>
</feature>
<feature type="topological domain" description="Lumenal" evidence="2">
    <location>
        <begin position="1427"/>
        <end position="1486"/>
    </location>
</feature>
<feature type="repeat" description="BNR 1">
    <location>
        <begin position="61"/>
        <end position="71"/>
    </location>
</feature>
<feature type="repeat" description="BNR 2">
    <location>
        <begin position="378"/>
        <end position="387"/>
    </location>
</feature>
<feature type="repeat" description="BNR 3">
    <location>
        <begin position="438"/>
        <end position="448"/>
    </location>
</feature>
<feature type="repeat" description="BNR 4">
    <location>
        <begin position="480"/>
        <end position="489"/>
    </location>
</feature>
<feature type="repeat" description="BNR 5">
    <location>
        <begin position="719"/>
        <end position="729"/>
    </location>
</feature>
<feature type="repeat" description="BNR 6">
    <location>
        <begin position="1102"/>
        <end position="1112"/>
    </location>
</feature>
<feature type="repeat" description="BNR 7">
    <location>
        <begin position="1144"/>
        <end position="1153"/>
    </location>
</feature>
<feature type="glycosylation site" description="N-linked (GlcNAc...) asparagine" evidence="2">
    <location>
        <position position="300"/>
    </location>
</feature>
<feature type="glycosylation site" description="N-linked (GlcNAc...) asparagine" evidence="2">
    <location>
        <position position="324"/>
    </location>
</feature>
<feature type="glycosylation site" description="N-linked (GlcNAc...) asparagine" evidence="2">
    <location>
        <position position="965"/>
    </location>
</feature>
<feature type="glycosylation site" description="N-linked (GlcNAc...) asparagine" evidence="2">
    <location>
        <position position="1263"/>
    </location>
</feature>